<gene>
    <name evidence="1" type="primary">lgt</name>
    <name type="ordered locus">GK3081</name>
</gene>
<comment type="function">
    <text evidence="1">Catalyzes the transfer of the diacylglyceryl group from phosphatidylglycerol to the sulfhydryl group of the N-terminal cysteine of a prolipoprotein, the first step in the formation of mature lipoproteins.</text>
</comment>
<comment type="catalytic activity">
    <reaction evidence="1">
        <text>L-cysteinyl-[prolipoprotein] + a 1,2-diacyl-sn-glycero-3-phospho-(1'-sn-glycerol) = an S-1,2-diacyl-sn-glyceryl-L-cysteinyl-[prolipoprotein] + sn-glycerol 1-phosphate + H(+)</text>
        <dbReference type="Rhea" id="RHEA:56712"/>
        <dbReference type="Rhea" id="RHEA-COMP:14679"/>
        <dbReference type="Rhea" id="RHEA-COMP:14680"/>
        <dbReference type="ChEBI" id="CHEBI:15378"/>
        <dbReference type="ChEBI" id="CHEBI:29950"/>
        <dbReference type="ChEBI" id="CHEBI:57685"/>
        <dbReference type="ChEBI" id="CHEBI:64716"/>
        <dbReference type="ChEBI" id="CHEBI:140658"/>
        <dbReference type="EC" id="2.5.1.145"/>
    </reaction>
</comment>
<comment type="pathway">
    <text evidence="1">Protein modification; lipoprotein biosynthesis (diacylglyceryl transfer).</text>
</comment>
<comment type="subcellular location">
    <subcellularLocation>
        <location evidence="1">Cell membrane</location>
        <topology evidence="1">Multi-pass membrane protein</topology>
    </subcellularLocation>
</comment>
<comment type="similarity">
    <text evidence="1">Belongs to the Lgt family.</text>
</comment>
<proteinExistence type="inferred from homology"/>
<evidence type="ECO:0000255" key="1">
    <source>
        <dbReference type="HAMAP-Rule" id="MF_01147"/>
    </source>
</evidence>
<accession>Q5KVC0</accession>
<feature type="chain" id="PRO_0000172605" description="Phosphatidylglycerol--prolipoprotein diacylglyceryl transferase">
    <location>
        <begin position="1"/>
        <end position="270"/>
    </location>
</feature>
<feature type="transmembrane region" description="Helical" evidence="1">
    <location>
        <begin position="18"/>
        <end position="38"/>
    </location>
</feature>
<feature type="transmembrane region" description="Helical" evidence="1">
    <location>
        <begin position="55"/>
        <end position="75"/>
    </location>
</feature>
<feature type="transmembrane region" description="Helical" evidence="1">
    <location>
        <begin position="90"/>
        <end position="110"/>
    </location>
</feature>
<feature type="transmembrane region" description="Helical" evidence="1">
    <location>
        <begin position="115"/>
        <end position="135"/>
    </location>
</feature>
<feature type="transmembrane region" description="Helical" evidence="1">
    <location>
        <begin position="177"/>
        <end position="197"/>
    </location>
</feature>
<feature type="transmembrane region" description="Helical" evidence="1">
    <location>
        <begin position="205"/>
        <end position="225"/>
    </location>
</feature>
<feature type="transmembrane region" description="Helical" evidence="1">
    <location>
        <begin position="236"/>
        <end position="256"/>
    </location>
</feature>
<feature type="binding site" evidence="1">
    <location>
        <position position="137"/>
    </location>
    <ligand>
        <name>a 1,2-diacyl-sn-glycero-3-phospho-(1'-sn-glycerol)</name>
        <dbReference type="ChEBI" id="CHEBI:64716"/>
    </ligand>
</feature>
<reference key="1">
    <citation type="journal article" date="2004" name="Nucleic Acids Res.">
        <title>Thermoadaptation trait revealed by the genome sequence of thermophilic Geobacillus kaustophilus.</title>
        <authorList>
            <person name="Takami H."/>
            <person name="Takaki Y."/>
            <person name="Chee G.-J."/>
            <person name="Nishi S."/>
            <person name="Shimamura S."/>
            <person name="Suzuki H."/>
            <person name="Matsui S."/>
            <person name="Uchiyama I."/>
        </authorList>
    </citation>
    <scope>NUCLEOTIDE SEQUENCE [LARGE SCALE GENOMIC DNA]</scope>
    <source>
        <strain>HTA426</strain>
    </source>
</reference>
<sequence length="270" mass="30850">MESTIQPLDRVFLHLGPITIYWYGVIIGTGVLIGLWLATREAVRRGLPKETFVDLVLFAVPIAIVCARAYYVLFEWHYYSKHLSEIPKVWQGGLAIHGGLIGAVATGAVFARARGLSFWKLADIAAPSIILGQAIGRWGNFMNQEAHGGPVSRQFLENLHLPDWIINQMYIDGRYWHPTFLYESLWNLVGFFLLLWLRRVNLRRGELFLSYLIWYSVGRFWIEGMRTDSLMLAGSLRAAQVVSVTLIVLSIALWIVRRAKGWAKARYQDE</sequence>
<keyword id="KW-1003">Cell membrane</keyword>
<keyword id="KW-0472">Membrane</keyword>
<keyword id="KW-1185">Reference proteome</keyword>
<keyword id="KW-0808">Transferase</keyword>
<keyword id="KW-0812">Transmembrane</keyword>
<keyword id="KW-1133">Transmembrane helix</keyword>
<name>LGT_GEOKA</name>
<protein>
    <recommendedName>
        <fullName evidence="1">Phosphatidylglycerol--prolipoprotein diacylglyceryl transferase</fullName>
        <ecNumber evidence="1">2.5.1.145</ecNumber>
    </recommendedName>
</protein>
<organism>
    <name type="scientific">Geobacillus kaustophilus (strain HTA426)</name>
    <dbReference type="NCBI Taxonomy" id="235909"/>
    <lineage>
        <taxon>Bacteria</taxon>
        <taxon>Bacillati</taxon>
        <taxon>Bacillota</taxon>
        <taxon>Bacilli</taxon>
        <taxon>Bacillales</taxon>
        <taxon>Anoxybacillaceae</taxon>
        <taxon>Geobacillus</taxon>
        <taxon>Geobacillus thermoleovorans group</taxon>
    </lineage>
</organism>
<dbReference type="EC" id="2.5.1.145" evidence="1"/>
<dbReference type="EMBL" id="BA000043">
    <property type="protein sequence ID" value="BAD77366.1"/>
    <property type="molecule type" value="Genomic_DNA"/>
</dbReference>
<dbReference type="RefSeq" id="WP_011232551.1">
    <property type="nucleotide sequence ID" value="NC_006510.1"/>
</dbReference>
<dbReference type="SMR" id="Q5KVC0"/>
<dbReference type="STRING" id="235909.GK3081"/>
<dbReference type="KEGG" id="gka:GK3081"/>
<dbReference type="eggNOG" id="COG0682">
    <property type="taxonomic scope" value="Bacteria"/>
</dbReference>
<dbReference type="HOGENOM" id="CLU_013386_1_2_9"/>
<dbReference type="UniPathway" id="UPA00664"/>
<dbReference type="Proteomes" id="UP000001172">
    <property type="component" value="Chromosome"/>
</dbReference>
<dbReference type="GO" id="GO:0005886">
    <property type="term" value="C:plasma membrane"/>
    <property type="evidence" value="ECO:0007669"/>
    <property type="project" value="UniProtKB-SubCell"/>
</dbReference>
<dbReference type="GO" id="GO:0008961">
    <property type="term" value="F:phosphatidylglycerol-prolipoprotein diacylglyceryl transferase activity"/>
    <property type="evidence" value="ECO:0007669"/>
    <property type="project" value="UniProtKB-UniRule"/>
</dbReference>
<dbReference type="GO" id="GO:0042158">
    <property type="term" value="P:lipoprotein biosynthetic process"/>
    <property type="evidence" value="ECO:0007669"/>
    <property type="project" value="UniProtKB-UniRule"/>
</dbReference>
<dbReference type="HAMAP" id="MF_01147">
    <property type="entry name" value="Lgt"/>
    <property type="match status" value="1"/>
</dbReference>
<dbReference type="InterPro" id="IPR001640">
    <property type="entry name" value="Lgt"/>
</dbReference>
<dbReference type="NCBIfam" id="TIGR00544">
    <property type="entry name" value="lgt"/>
    <property type="match status" value="1"/>
</dbReference>
<dbReference type="PANTHER" id="PTHR30589:SF0">
    <property type="entry name" value="PHOSPHATIDYLGLYCEROL--PROLIPOPROTEIN DIACYLGLYCERYL TRANSFERASE"/>
    <property type="match status" value="1"/>
</dbReference>
<dbReference type="PANTHER" id="PTHR30589">
    <property type="entry name" value="PROLIPOPROTEIN DIACYLGLYCERYL TRANSFERASE"/>
    <property type="match status" value="1"/>
</dbReference>
<dbReference type="Pfam" id="PF01790">
    <property type="entry name" value="LGT"/>
    <property type="match status" value="1"/>
</dbReference>
<dbReference type="PROSITE" id="PS01311">
    <property type="entry name" value="LGT"/>
    <property type="match status" value="1"/>
</dbReference>